<keyword id="KW-0027">Amidation</keyword>
<keyword id="KW-0044">Antibiotic</keyword>
<keyword id="KW-0929">Antimicrobial</keyword>
<keyword id="KW-0903">Direct protein sequencing</keyword>
<keyword id="KW-1015">Disulfide bond</keyword>
<keyword id="KW-0732">Signal</keyword>
<name>AMP1_PARCM</name>
<feature type="signal peptide" evidence="1">
    <location>
        <begin position="1"/>
        <end position="23"/>
    </location>
</feature>
<feature type="peptide" id="PRO_0000444206" description="Paralithocin 1" evidence="1">
    <location>
        <begin position="24"/>
        <end position="61"/>
    </location>
</feature>
<feature type="modified residue" description="Tyrosine amide; partial" evidence="1">
    <location>
        <position position="61"/>
    </location>
</feature>
<feature type="disulfide bond" evidence="1">
    <location>
        <begin position="29"/>
        <end position="55"/>
    </location>
</feature>
<feature type="disulfide bond" evidence="1">
    <location>
        <begin position="33"/>
        <end position="51"/>
    </location>
</feature>
<feature type="disulfide bond" evidence="1">
    <location>
        <begin position="37"/>
        <end position="49"/>
    </location>
</feature>
<feature type="disulfide bond" evidence="1">
    <location>
        <begin position="42"/>
        <end position="52"/>
    </location>
</feature>
<organism evidence="4">
    <name type="scientific">Paralithodes camtschaticus</name>
    <name type="common">Red king crab</name>
    <name type="synonym">Maja camtschatica</name>
    <dbReference type="NCBI Taxonomy" id="6741"/>
    <lineage>
        <taxon>Eukaryota</taxon>
        <taxon>Metazoa</taxon>
        <taxon>Ecdysozoa</taxon>
        <taxon>Arthropoda</taxon>
        <taxon>Crustacea</taxon>
        <taxon>Multicrustacea</taxon>
        <taxon>Malacostraca</taxon>
        <taxon>Eumalacostraca</taxon>
        <taxon>Eucarida</taxon>
        <taxon>Decapoda</taxon>
        <taxon>Pleocyemata</taxon>
        <taxon>Anomura</taxon>
        <taxon>Paguroidea</taxon>
        <taxon>Lithodidae</taxon>
        <taxon>Paralithodes</taxon>
    </lineage>
</organism>
<sequence>MGPMKVLLVLLVVMVAAPHIADAWQQPSCSSICDYSCGKSACISYSGRCGCCASCRRGPIYG</sequence>
<protein>
    <recommendedName>
        <fullName evidence="4">Paralithocin 1</fullName>
    </recommendedName>
    <alternativeName>
        <fullName evidence="2">P23</fullName>
    </alternativeName>
</protein>
<evidence type="ECO:0000269" key="1">
    <source>
    </source>
</evidence>
<evidence type="ECO:0000303" key="2">
    <source>
    </source>
</evidence>
<evidence type="ECO:0000305" key="3">
    <source>
    </source>
</evidence>
<evidence type="ECO:0000312" key="4">
    <source>
        <dbReference type="EMBL" id="AUT12057.1"/>
    </source>
</evidence>
<accession>A0A2I8B346</accession>
<comment type="function">
    <text evidence="1">Has weak antibacterial activity, mainly against marine Gram-positive bacteria like C.maltaromaticum (MIC=200 uM), C.mobile (MIC=100 uM), C.divergens (MIC=200 uM) and C.funditum (MIC=200 uM) but also against C.glutamicum (MIC=50 uM). Has very little or no activity against Gram-negative bacteria.</text>
</comment>
<comment type="PTM">
    <text evidence="2">The amidated form is probably the active form.</text>
</comment>
<comment type="mass spectrometry">
    <text>Amidated.</text>
</comment>
<comment type="mass spectrometry">
    <text>Not amidated.</text>
</comment>
<comment type="similarity">
    <text evidence="3">Belongs to the paralithocin family.</text>
</comment>
<reference evidence="4" key="1">
    <citation type="journal article" date="2018" name="J. Nat. Prod.">
        <title>Paralithocins, Antimicrobial Peptides with Unusual Disulfide Connectivity from the Red King Crab, Paralithodes camtschaticus.</title>
        <authorList>
            <person name="Moe M.K."/>
            <person name="Haug T."/>
            <person name="Sydnes M.O."/>
            <person name="Sperstad S.V."/>
            <person name="Li C."/>
            <person name="Vaagsfjord L.C."/>
            <person name="de la Vega E."/>
            <person name="Stensvaag K."/>
        </authorList>
    </citation>
    <scope>NUCLEOTIDE SEQUENCE [MRNA]</scope>
    <scope>PROTEIN SEQUENCE OF 24-62</scope>
    <scope>FUNCTION</scope>
    <scope>MASS SPECTROMETRY</scope>
    <scope>AMIDATION AT TYR-61</scope>
    <scope>DISULFIDE BONDS</scope>
    <scope>IDENTIFICATION BY MASS SPECTROMETRY</scope>
    <source>
        <tissue evidence="2">Hemocyte</tissue>
    </source>
</reference>
<proteinExistence type="evidence at protein level"/>
<dbReference type="EMBL" id="MF919584">
    <property type="protein sequence ID" value="AUT12057.1"/>
    <property type="molecule type" value="mRNA"/>
</dbReference>
<dbReference type="GO" id="GO:0050830">
    <property type="term" value="P:defense response to Gram-positive bacterium"/>
    <property type="evidence" value="ECO:0000314"/>
    <property type="project" value="UniProtKB"/>
</dbReference>
<dbReference type="GO" id="GO:0031640">
    <property type="term" value="P:killing of cells of another organism"/>
    <property type="evidence" value="ECO:0000314"/>
    <property type="project" value="UniProtKB"/>
</dbReference>